<keyword id="KW-0489">Methyltransferase</keyword>
<keyword id="KW-1185">Reference proteome</keyword>
<keyword id="KW-0949">S-adenosyl-L-methionine</keyword>
<keyword id="KW-0808">Transferase</keyword>
<sequence>MEPGPGGRGAARGQRPPNAAQPREQERKLEQEKLSGVVKSVHRRLRKKYREVGDFDKIWREHCEDAETLCEYAVAMKNLADNHWAKTCEGEGRIEWCCSVCREYFQNGGKRKALEKDEKRAVLATKTTPALNVHESSKLEGPLTNLSFTSPDFITELLQASGKIRLLDVGSCFNPFLKFEEFLTVGIDIVPAVESVYKCDFLNLQLQQPLQLAQDAIDAFLKQLRNPIDALPGELFHVVVFSLLLSYFPSPYQRWICCKKAHELLVLNGLLLIITPDSSHQNRHAMMMKSWKIAIESLGFKRFKYSKFSHMHLMAFRKTSLKTTSDLVSRNYPGMLYIPQDFNSVEEEEYSNTSCYVRSDLEDEQLAYGFTELPEAPYDSDSGESQASSIPFYELEDPILLLS</sequence>
<evidence type="ECO:0000255" key="1">
    <source>
        <dbReference type="HAMAP-Rule" id="MF_03044"/>
    </source>
</evidence>
<evidence type="ECO:0000256" key="2">
    <source>
        <dbReference type="SAM" id="MobiDB-lite"/>
    </source>
</evidence>
<evidence type="ECO:0000305" key="3"/>
<evidence type="ECO:0000312" key="4">
    <source>
        <dbReference type="MGI" id="MGI:2141466"/>
    </source>
</evidence>
<proteinExistence type="evidence at transcript level"/>
<accession>Q8BXK4</accession>
<accession>A6H608</accession>
<reference key="1">
    <citation type="journal article" date="2005" name="Science">
        <title>The transcriptional landscape of the mammalian genome.</title>
        <authorList>
            <person name="Carninci P."/>
            <person name="Kasukawa T."/>
            <person name="Katayama S."/>
            <person name="Gough J."/>
            <person name="Frith M.C."/>
            <person name="Maeda N."/>
            <person name="Oyama R."/>
            <person name="Ravasi T."/>
            <person name="Lenhard B."/>
            <person name="Wells C."/>
            <person name="Kodzius R."/>
            <person name="Shimokawa K."/>
            <person name="Bajic V.B."/>
            <person name="Brenner S.E."/>
            <person name="Batalov S."/>
            <person name="Forrest A.R."/>
            <person name="Zavolan M."/>
            <person name="Davis M.J."/>
            <person name="Wilming L.G."/>
            <person name="Aidinis V."/>
            <person name="Allen J.E."/>
            <person name="Ambesi-Impiombato A."/>
            <person name="Apweiler R."/>
            <person name="Aturaliya R.N."/>
            <person name="Bailey T.L."/>
            <person name="Bansal M."/>
            <person name="Baxter L."/>
            <person name="Beisel K.W."/>
            <person name="Bersano T."/>
            <person name="Bono H."/>
            <person name="Chalk A.M."/>
            <person name="Chiu K.P."/>
            <person name="Choudhary V."/>
            <person name="Christoffels A."/>
            <person name="Clutterbuck D.R."/>
            <person name="Crowe M.L."/>
            <person name="Dalla E."/>
            <person name="Dalrymple B.P."/>
            <person name="de Bono B."/>
            <person name="Della Gatta G."/>
            <person name="di Bernardo D."/>
            <person name="Down T."/>
            <person name="Engstrom P."/>
            <person name="Fagiolini M."/>
            <person name="Faulkner G."/>
            <person name="Fletcher C.F."/>
            <person name="Fukushima T."/>
            <person name="Furuno M."/>
            <person name="Futaki S."/>
            <person name="Gariboldi M."/>
            <person name="Georgii-Hemming P."/>
            <person name="Gingeras T.R."/>
            <person name="Gojobori T."/>
            <person name="Green R.E."/>
            <person name="Gustincich S."/>
            <person name="Harbers M."/>
            <person name="Hayashi Y."/>
            <person name="Hensch T.K."/>
            <person name="Hirokawa N."/>
            <person name="Hill D."/>
            <person name="Huminiecki L."/>
            <person name="Iacono M."/>
            <person name="Ikeo K."/>
            <person name="Iwama A."/>
            <person name="Ishikawa T."/>
            <person name="Jakt M."/>
            <person name="Kanapin A."/>
            <person name="Katoh M."/>
            <person name="Kawasawa Y."/>
            <person name="Kelso J."/>
            <person name="Kitamura H."/>
            <person name="Kitano H."/>
            <person name="Kollias G."/>
            <person name="Krishnan S.P."/>
            <person name="Kruger A."/>
            <person name="Kummerfeld S.K."/>
            <person name="Kurochkin I.V."/>
            <person name="Lareau L.F."/>
            <person name="Lazarevic D."/>
            <person name="Lipovich L."/>
            <person name="Liu J."/>
            <person name="Liuni S."/>
            <person name="McWilliam S."/>
            <person name="Madan Babu M."/>
            <person name="Madera M."/>
            <person name="Marchionni L."/>
            <person name="Matsuda H."/>
            <person name="Matsuzawa S."/>
            <person name="Miki H."/>
            <person name="Mignone F."/>
            <person name="Miyake S."/>
            <person name="Morris K."/>
            <person name="Mottagui-Tabar S."/>
            <person name="Mulder N."/>
            <person name="Nakano N."/>
            <person name="Nakauchi H."/>
            <person name="Ng P."/>
            <person name="Nilsson R."/>
            <person name="Nishiguchi S."/>
            <person name="Nishikawa S."/>
            <person name="Nori F."/>
            <person name="Ohara O."/>
            <person name="Okazaki Y."/>
            <person name="Orlando V."/>
            <person name="Pang K.C."/>
            <person name="Pavan W.J."/>
            <person name="Pavesi G."/>
            <person name="Pesole G."/>
            <person name="Petrovsky N."/>
            <person name="Piazza S."/>
            <person name="Reed J."/>
            <person name="Reid J.F."/>
            <person name="Ring B.Z."/>
            <person name="Ringwald M."/>
            <person name="Rost B."/>
            <person name="Ruan Y."/>
            <person name="Salzberg S.L."/>
            <person name="Sandelin A."/>
            <person name="Schneider C."/>
            <person name="Schoenbach C."/>
            <person name="Sekiguchi K."/>
            <person name="Semple C.A."/>
            <person name="Seno S."/>
            <person name="Sessa L."/>
            <person name="Sheng Y."/>
            <person name="Shibata Y."/>
            <person name="Shimada H."/>
            <person name="Shimada K."/>
            <person name="Silva D."/>
            <person name="Sinclair B."/>
            <person name="Sperling S."/>
            <person name="Stupka E."/>
            <person name="Sugiura K."/>
            <person name="Sultana R."/>
            <person name="Takenaka Y."/>
            <person name="Taki K."/>
            <person name="Tammoja K."/>
            <person name="Tan S.L."/>
            <person name="Tang S."/>
            <person name="Taylor M.S."/>
            <person name="Tegner J."/>
            <person name="Teichmann S.A."/>
            <person name="Ueda H.R."/>
            <person name="van Nimwegen E."/>
            <person name="Verardo R."/>
            <person name="Wei C.L."/>
            <person name="Yagi K."/>
            <person name="Yamanishi H."/>
            <person name="Zabarovsky E."/>
            <person name="Zhu S."/>
            <person name="Zimmer A."/>
            <person name="Hide W."/>
            <person name="Bult C."/>
            <person name="Grimmond S.M."/>
            <person name="Teasdale R.D."/>
            <person name="Liu E.T."/>
            <person name="Brusic V."/>
            <person name="Quackenbush J."/>
            <person name="Wahlestedt C."/>
            <person name="Mattick J.S."/>
            <person name="Hume D.A."/>
            <person name="Kai C."/>
            <person name="Sasaki D."/>
            <person name="Tomaru Y."/>
            <person name="Fukuda S."/>
            <person name="Kanamori-Katayama M."/>
            <person name="Suzuki M."/>
            <person name="Aoki J."/>
            <person name="Arakawa T."/>
            <person name="Iida J."/>
            <person name="Imamura K."/>
            <person name="Itoh M."/>
            <person name="Kato T."/>
            <person name="Kawaji H."/>
            <person name="Kawagashira N."/>
            <person name="Kawashima T."/>
            <person name="Kojima M."/>
            <person name="Kondo S."/>
            <person name="Konno H."/>
            <person name="Nakano K."/>
            <person name="Ninomiya N."/>
            <person name="Nishio T."/>
            <person name="Okada M."/>
            <person name="Plessy C."/>
            <person name="Shibata K."/>
            <person name="Shiraki T."/>
            <person name="Suzuki S."/>
            <person name="Tagami M."/>
            <person name="Waki K."/>
            <person name="Watahiki A."/>
            <person name="Okamura-Oho Y."/>
            <person name="Suzuki H."/>
            <person name="Kawai J."/>
            <person name="Hayashizaki Y."/>
        </authorList>
    </citation>
    <scope>NUCLEOTIDE SEQUENCE [LARGE SCALE MRNA]</scope>
    <source>
        <strain>C57BL/6J</strain>
        <tissue>Thymus</tissue>
    </source>
</reference>
<reference key="2">
    <citation type="journal article" date="2004" name="Genome Res.">
        <title>The status, quality, and expansion of the NIH full-length cDNA project: the Mammalian Gene Collection (MGC).</title>
        <authorList>
            <consortium name="The MGC Project Team"/>
        </authorList>
    </citation>
    <scope>NUCLEOTIDE SEQUENCE [LARGE SCALE MRNA]</scope>
    <source>
        <tissue>Brain</tissue>
    </source>
</reference>
<organism>
    <name type="scientific">Mus musculus</name>
    <name type="common">Mouse</name>
    <dbReference type="NCBI Taxonomy" id="10090"/>
    <lineage>
        <taxon>Eukaryota</taxon>
        <taxon>Metazoa</taxon>
        <taxon>Chordata</taxon>
        <taxon>Craniata</taxon>
        <taxon>Vertebrata</taxon>
        <taxon>Euteleostomi</taxon>
        <taxon>Mammalia</taxon>
        <taxon>Eutheria</taxon>
        <taxon>Euarchontoglires</taxon>
        <taxon>Glires</taxon>
        <taxon>Rodentia</taxon>
        <taxon>Myomorpha</taxon>
        <taxon>Muroidea</taxon>
        <taxon>Muridae</taxon>
        <taxon>Murinae</taxon>
        <taxon>Mus</taxon>
        <taxon>Mus</taxon>
    </lineage>
</organism>
<feature type="chain" id="PRO_0000321540" description="S-adenosylmethionine sensor upstream of mTORC1">
    <location>
        <begin position="1"/>
        <end position="403"/>
    </location>
</feature>
<feature type="region of interest" description="Disordered" evidence="2">
    <location>
        <begin position="1"/>
        <end position="32"/>
    </location>
</feature>
<feature type="compositionally biased region" description="Gly residues" evidence="2">
    <location>
        <begin position="1"/>
        <end position="10"/>
    </location>
</feature>
<feature type="compositionally biased region" description="Low complexity" evidence="2">
    <location>
        <begin position="11"/>
        <end position="22"/>
    </location>
</feature>
<feature type="compositionally biased region" description="Basic and acidic residues" evidence="2">
    <location>
        <begin position="23"/>
        <end position="32"/>
    </location>
</feature>
<feature type="binding site" evidence="1">
    <location>
        <position position="93"/>
    </location>
    <ligand>
        <name>S-adenosyl-L-methionine</name>
        <dbReference type="ChEBI" id="CHEBI:59789"/>
    </ligand>
</feature>
<feature type="binding site" evidence="1">
    <location>
        <position position="170"/>
    </location>
    <ligand>
        <name>S-adenosyl-L-methionine</name>
        <dbReference type="ChEBI" id="CHEBI:59789"/>
    </ligand>
</feature>
<feature type="binding site" evidence="1">
    <location>
        <position position="188"/>
    </location>
    <ligand>
        <name>S-adenosyl-L-methionine</name>
        <dbReference type="ChEBI" id="CHEBI:59789"/>
    </ligand>
</feature>
<feature type="binding site" evidence="1">
    <location>
        <position position="200"/>
    </location>
    <ligand>
        <name>S-adenosyl-L-methionine</name>
        <dbReference type="ChEBI" id="CHEBI:59789"/>
    </ligand>
</feature>
<feature type="binding site" evidence="1">
    <location>
        <position position="201"/>
    </location>
    <ligand>
        <name>S-adenosyl-L-methionine</name>
        <dbReference type="ChEBI" id="CHEBI:59789"/>
    </ligand>
</feature>
<feature type="binding site" evidence="1">
    <location>
        <position position="242"/>
    </location>
    <ligand>
        <name>S-adenosyl-L-methionine</name>
        <dbReference type="ChEBI" id="CHEBI:59789"/>
    </ligand>
</feature>
<dbReference type="EC" id="2.1.1.-" evidence="1"/>
<dbReference type="EMBL" id="AK046745">
    <property type="protein sequence ID" value="BAC32852.1"/>
    <property type="status" value="ALT_FRAME"/>
    <property type="molecule type" value="mRNA"/>
</dbReference>
<dbReference type="EMBL" id="BC145708">
    <property type="protein sequence ID" value="AAI45709.1"/>
    <property type="molecule type" value="mRNA"/>
</dbReference>
<dbReference type="EMBL" id="BC145710">
    <property type="protein sequence ID" value="AAI45711.1"/>
    <property type="molecule type" value="mRNA"/>
</dbReference>
<dbReference type="CCDS" id="CCDS51723.1"/>
<dbReference type="RefSeq" id="NP_780521.2">
    <property type="nucleotide sequence ID" value="NM_175312.4"/>
</dbReference>
<dbReference type="SMR" id="Q8BXK4"/>
<dbReference type="FunCoup" id="Q8BXK4">
    <property type="interactions" value="363"/>
</dbReference>
<dbReference type="STRING" id="10090.ENSMUSP00000040578"/>
<dbReference type="iPTMnet" id="Q8BXK4"/>
<dbReference type="PhosphoSitePlus" id="Q8BXK4"/>
<dbReference type="SwissPalm" id="Q8BXK4"/>
<dbReference type="PaxDb" id="10090-ENSMUSP00000040578"/>
<dbReference type="PeptideAtlas" id="Q8BXK4"/>
<dbReference type="ProteomicsDB" id="260823"/>
<dbReference type="Pumba" id="Q8BXK4"/>
<dbReference type="Antibodypedia" id="50763">
    <property type="antibodies" value="13 antibodies from 8 providers"/>
</dbReference>
<dbReference type="DNASU" id="101148"/>
<dbReference type="Ensembl" id="ENSMUST00000045235.8">
    <property type="protein sequence ID" value="ENSMUSP00000040578.6"/>
    <property type="gene ID" value="ENSMUSG00000042742.8"/>
</dbReference>
<dbReference type="GeneID" id="101148"/>
<dbReference type="KEGG" id="mmu:101148"/>
<dbReference type="UCSC" id="uc012eic.1">
    <property type="organism name" value="mouse"/>
</dbReference>
<dbReference type="AGR" id="MGI:2141466"/>
<dbReference type="CTD" id="154743"/>
<dbReference type="MGI" id="MGI:2141466">
    <property type="gene designation" value="Bmt2"/>
</dbReference>
<dbReference type="VEuPathDB" id="HostDB:ENSMUSG00000042742"/>
<dbReference type="eggNOG" id="ENOG502QRK4">
    <property type="taxonomic scope" value="Eukaryota"/>
</dbReference>
<dbReference type="GeneTree" id="ENSGT00390000010382"/>
<dbReference type="HOGENOM" id="CLU_036404_1_1_1"/>
<dbReference type="InParanoid" id="Q8BXK4"/>
<dbReference type="OMA" id="CCQKAYE"/>
<dbReference type="OrthoDB" id="5954793at2759"/>
<dbReference type="PhylomeDB" id="Q8BXK4"/>
<dbReference type="TreeFam" id="TF324724"/>
<dbReference type="Reactome" id="R-MMU-9639288">
    <property type="pathway name" value="Amino acids regulate mTORC1"/>
</dbReference>
<dbReference type="BioGRID-ORCS" id="101148">
    <property type="hits" value="3 hits in 76 CRISPR screens"/>
</dbReference>
<dbReference type="ChiTaRS" id="Bmt2">
    <property type="organism name" value="mouse"/>
</dbReference>
<dbReference type="PRO" id="PR:Q8BXK4"/>
<dbReference type="Proteomes" id="UP000000589">
    <property type="component" value="Chromosome 6"/>
</dbReference>
<dbReference type="RNAct" id="Q8BXK4">
    <property type="molecule type" value="protein"/>
</dbReference>
<dbReference type="Bgee" id="ENSMUSG00000042742">
    <property type="expression patterns" value="Expressed in manus and 226 other cell types or tissues"/>
</dbReference>
<dbReference type="ExpressionAtlas" id="Q8BXK4">
    <property type="expression patterns" value="baseline and differential"/>
</dbReference>
<dbReference type="GO" id="GO:0008168">
    <property type="term" value="F:methyltransferase activity"/>
    <property type="evidence" value="ECO:0007669"/>
    <property type="project" value="UniProtKB-UniRule"/>
</dbReference>
<dbReference type="GO" id="GO:0044877">
    <property type="term" value="F:protein-containing complex binding"/>
    <property type="evidence" value="ECO:0007669"/>
    <property type="project" value="Ensembl"/>
</dbReference>
<dbReference type="GO" id="GO:1904047">
    <property type="term" value="F:S-adenosyl-L-methionine binding"/>
    <property type="evidence" value="ECO:0000250"/>
    <property type="project" value="UniProtKB"/>
</dbReference>
<dbReference type="GO" id="GO:0034198">
    <property type="term" value="P:cellular response to amino acid starvation"/>
    <property type="evidence" value="ECO:0000250"/>
    <property type="project" value="UniProtKB"/>
</dbReference>
<dbReference type="GO" id="GO:0061431">
    <property type="term" value="P:cellular response to methionine"/>
    <property type="evidence" value="ECO:0007669"/>
    <property type="project" value="Ensembl"/>
</dbReference>
<dbReference type="GO" id="GO:0032259">
    <property type="term" value="P:methylation"/>
    <property type="evidence" value="ECO:0007669"/>
    <property type="project" value="UniProtKB-KW"/>
</dbReference>
<dbReference type="GO" id="GO:1904263">
    <property type="term" value="P:positive regulation of TORC1 signaling"/>
    <property type="evidence" value="ECO:0007669"/>
    <property type="project" value="Ensembl"/>
</dbReference>
<dbReference type="GO" id="GO:1903432">
    <property type="term" value="P:regulation of TORC1 signaling"/>
    <property type="evidence" value="ECO:0000250"/>
    <property type="project" value="UniProtKB"/>
</dbReference>
<dbReference type="FunFam" id="3.40.50.150:FF:000089">
    <property type="entry name" value="S-adenosylmethionine sensor upstream of mTORC1"/>
    <property type="match status" value="1"/>
</dbReference>
<dbReference type="Gene3D" id="3.40.50.150">
    <property type="entry name" value="Vaccinia Virus protein VP39"/>
    <property type="match status" value="1"/>
</dbReference>
<dbReference type="HAMAP" id="MF_03044">
    <property type="entry name" value="BMT2"/>
    <property type="match status" value="1"/>
</dbReference>
<dbReference type="InterPro" id="IPR021867">
    <property type="entry name" value="Bmt2/SAMTOR"/>
</dbReference>
<dbReference type="InterPro" id="IPR029063">
    <property type="entry name" value="SAM-dependent_MTases_sf"/>
</dbReference>
<dbReference type="PANTHER" id="PTHR21008:SF0">
    <property type="entry name" value="S-ADENOSYLMETHIONINE SENSOR UPSTREAM OF MTORC1"/>
    <property type="match status" value="1"/>
</dbReference>
<dbReference type="PANTHER" id="PTHR21008">
    <property type="entry name" value="S-ADENOSYLMETHIONINE SENSOR UPSTREAM OF MTORC1-RELATED"/>
    <property type="match status" value="1"/>
</dbReference>
<dbReference type="Pfam" id="PF11968">
    <property type="entry name" value="Bmt2"/>
    <property type="match status" value="1"/>
</dbReference>
<dbReference type="SUPFAM" id="SSF53335">
    <property type="entry name" value="S-adenosyl-L-methionine-dependent methyltransferases"/>
    <property type="match status" value="1"/>
</dbReference>
<name>SAMTR_MOUSE</name>
<comment type="function">
    <text evidence="1">S-adenosyl-L-methionine-binding protein that acts as an inhibitor of mTORC1 signaling via interaction with the GATOR1 and KICSTOR complexes. Acts as a sensor of S-adenosyl-L-methionine to signal methionine sufficiency to mTORC1: in presence of methionine, binds S-adenosyl-L-methionine, leading to disrupt interaction with the GATOR1 and KICSTOR complexes and promote mTORC1 signaling. Upon methionine starvation, S-adenosyl-L-methionine levels are reduced, thereby promoting the association with GATOR1 and KICSTOR, leading to inhibit mTORC1 signaling. Probably also acts as a S-adenosyl-L-methionine-dependent methyltransferase.</text>
</comment>
<comment type="subunit">
    <text evidence="1">Interacts with the GATOR1 complex; interaction is disrupted when SAMTOR binds S-adenosyl-L-methionine. Interacts with the KICSTOR complex; interaction is disrupted when SAMTOR binds S-adenosyl-L-methionine.</text>
</comment>
<comment type="similarity">
    <text evidence="1">Belongs to the BMT2/SAMTOR family.</text>
</comment>
<comment type="sequence caution" evidence="3">
    <conflict type="frameshift">
        <sequence resource="EMBL-CDS" id="BAC32852"/>
    </conflict>
</comment>
<protein>
    <recommendedName>
        <fullName evidence="1">S-adenosylmethionine sensor upstream of mTORC1</fullName>
    </recommendedName>
    <alternativeName>
        <fullName evidence="1">Probable methyltransferase BMT2 homolog</fullName>
        <ecNumber evidence="1">2.1.1.-</ecNumber>
    </alternativeName>
</protein>
<gene>
    <name evidence="1 4" type="primary">Samtor</name>
    <name evidence="1" type="synonym">Bmt2</name>
</gene>